<gene>
    <name evidence="1" type="primary">aroQ</name>
    <name type="ordered locus">BT9727_3941</name>
</gene>
<evidence type="ECO:0000255" key="1">
    <source>
        <dbReference type="HAMAP-Rule" id="MF_00169"/>
    </source>
</evidence>
<accession>Q6HDW6</accession>
<keyword id="KW-0028">Amino-acid biosynthesis</keyword>
<keyword id="KW-0057">Aromatic amino acid biosynthesis</keyword>
<keyword id="KW-0456">Lyase</keyword>
<protein>
    <recommendedName>
        <fullName evidence="1">3-dehydroquinate dehydratase</fullName>
        <shortName evidence="1">3-dehydroquinase</shortName>
        <ecNumber evidence="1">4.2.1.10</ecNumber>
    </recommendedName>
    <alternativeName>
        <fullName evidence="1">Type II DHQase</fullName>
    </alternativeName>
</protein>
<reference key="1">
    <citation type="journal article" date="2006" name="J. Bacteriol.">
        <title>Pathogenomic sequence analysis of Bacillus cereus and Bacillus thuringiensis isolates closely related to Bacillus anthracis.</title>
        <authorList>
            <person name="Han C.S."/>
            <person name="Xie G."/>
            <person name="Challacombe J.F."/>
            <person name="Altherr M.R."/>
            <person name="Bhotika S.S."/>
            <person name="Bruce D."/>
            <person name="Campbell C.S."/>
            <person name="Campbell M.L."/>
            <person name="Chen J."/>
            <person name="Chertkov O."/>
            <person name="Cleland C."/>
            <person name="Dimitrijevic M."/>
            <person name="Doggett N.A."/>
            <person name="Fawcett J.J."/>
            <person name="Glavina T."/>
            <person name="Goodwin L.A."/>
            <person name="Hill K.K."/>
            <person name="Hitchcock P."/>
            <person name="Jackson P.J."/>
            <person name="Keim P."/>
            <person name="Kewalramani A.R."/>
            <person name="Longmire J."/>
            <person name="Lucas S."/>
            <person name="Malfatti S."/>
            <person name="McMurry K."/>
            <person name="Meincke L.J."/>
            <person name="Misra M."/>
            <person name="Moseman B.L."/>
            <person name="Mundt M."/>
            <person name="Munk A.C."/>
            <person name="Okinaka R.T."/>
            <person name="Parson-Quintana B."/>
            <person name="Reilly L.P."/>
            <person name="Richardson P."/>
            <person name="Robinson D.L."/>
            <person name="Rubin E."/>
            <person name="Saunders E."/>
            <person name="Tapia R."/>
            <person name="Tesmer J.G."/>
            <person name="Thayer N."/>
            <person name="Thompson L.S."/>
            <person name="Tice H."/>
            <person name="Ticknor L.O."/>
            <person name="Wills P.L."/>
            <person name="Brettin T.S."/>
            <person name="Gilna P."/>
        </authorList>
    </citation>
    <scope>NUCLEOTIDE SEQUENCE [LARGE SCALE GENOMIC DNA]</scope>
    <source>
        <strain>97-27</strain>
    </source>
</reference>
<name>AROQ_BACHK</name>
<dbReference type="EC" id="4.2.1.10" evidence="1"/>
<dbReference type="EMBL" id="AE017355">
    <property type="protein sequence ID" value="AAT61041.1"/>
    <property type="molecule type" value="Genomic_DNA"/>
</dbReference>
<dbReference type="RefSeq" id="WP_000757082.1">
    <property type="nucleotide sequence ID" value="NC_005957.1"/>
</dbReference>
<dbReference type="RefSeq" id="YP_038260.1">
    <property type="nucleotide sequence ID" value="NC_005957.1"/>
</dbReference>
<dbReference type="SMR" id="Q6HDW6"/>
<dbReference type="GeneID" id="45024083"/>
<dbReference type="KEGG" id="btk:BT9727_3941"/>
<dbReference type="PATRIC" id="fig|281309.8.peg.4204"/>
<dbReference type="HOGENOM" id="CLU_090968_3_0_9"/>
<dbReference type="UniPathway" id="UPA00053">
    <property type="reaction ID" value="UER00086"/>
</dbReference>
<dbReference type="Proteomes" id="UP000001301">
    <property type="component" value="Chromosome"/>
</dbReference>
<dbReference type="GO" id="GO:0003855">
    <property type="term" value="F:3-dehydroquinate dehydratase activity"/>
    <property type="evidence" value="ECO:0007669"/>
    <property type="project" value="UniProtKB-UniRule"/>
</dbReference>
<dbReference type="GO" id="GO:0008652">
    <property type="term" value="P:amino acid biosynthetic process"/>
    <property type="evidence" value="ECO:0007669"/>
    <property type="project" value="UniProtKB-KW"/>
</dbReference>
<dbReference type="GO" id="GO:0009073">
    <property type="term" value="P:aromatic amino acid family biosynthetic process"/>
    <property type="evidence" value="ECO:0007669"/>
    <property type="project" value="UniProtKB-KW"/>
</dbReference>
<dbReference type="GO" id="GO:0009423">
    <property type="term" value="P:chorismate biosynthetic process"/>
    <property type="evidence" value="ECO:0007669"/>
    <property type="project" value="UniProtKB-UniRule"/>
</dbReference>
<dbReference type="GO" id="GO:0019631">
    <property type="term" value="P:quinate catabolic process"/>
    <property type="evidence" value="ECO:0007669"/>
    <property type="project" value="TreeGrafter"/>
</dbReference>
<dbReference type="CDD" id="cd00466">
    <property type="entry name" value="DHQase_II"/>
    <property type="match status" value="1"/>
</dbReference>
<dbReference type="Gene3D" id="3.40.50.9100">
    <property type="entry name" value="Dehydroquinase, class II"/>
    <property type="match status" value="1"/>
</dbReference>
<dbReference type="HAMAP" id="MF_00169">
    <property type="entry name" value="AroQ"/>
    <property type="match status" value="1"/>
</dbReference>
<dbReference type="InterPro" id="IPR001874">
    <property type="entry name" value="DHquinase_II"/>
</dbReference>
<dbReference type="InterPro" id="IPR018509">
    <property type="entry name" value="DHquinase_II_CS"/>
</dbReference>
<dbReference type="InterPro" id="IPR036441">
    <property type="entry name" value="DHquinase_II_sf"/>
</dbReference>
<dbReference type="NCBIfam" id="TIGR01088">
    <property type="entry name" value="aroQ"/>
    <property type="match status" value="1"/>
</dbReference>
<dbReference type="NCBIfam" id="NF003805">
    <property type="entry name" value="PRK05395.1-2"/>
    <property type="match status" value="1"/>
</dbReference>
<dbReference type="NCBIfam" id="NF003806">
    <property type="entry name" value="PRK05395.1-3"/>
    <property type="match status" value="1"/>
</dbReference>
<dbReference type="NCBIfam" id="NF003807">
    <property type="entry name" value="PRK05395.1-4"/>
    <property type="match status" value="1"/>
</dbReference>
<dbReference type="PANTHER" id="PTHR21272">
    <property type="entry name" value="CATABOLIC 3-DEHYDROQUINASE"/>
    <property type="match status" value="1"/>
</dbReference>
<dbReference type="PANTHER" id="PTHR21272:SF3">
    <property type="entry name" value="CATABOLIC 3-DEHYDROQUINASE"/>
    <property type="match status" value="1"/>
</dbReference>
<dbReference type="Pfam" id="PF01220">
    <property type="entry name" value="DHquinase_II"/>
    <property type="match status" value="1"/>
</dbReference>
<dbReference type="PIRSF" id="PIRSF001399">
    <property type="entry name" value="DHquinase_II"/>
    <property type="match status" value="1"/>
</dbReference>
<dbReference type="SUPFAM" id="SSF52304">
    <property type="entry name" value="Type II 3-dehydroquinate dehydratase"/>
    <property type="match status" value="1"/>
</dbReference>
<dbReference type="PROSITE" id="PS01029">
    <property type="entry name" value="DEHYDROQUINASE_II"/>
    <property type="match status" value="1"/>
</dbReference>
<sequence>MKKVLLVNGPNLNRLGVREVNVYGKGTLATLEADMKQEAEAMGVELECFQSNHEGAIIDRIHEAEDIYEGIILNPGAFTHYSYAIRDAIASISIPVIEVHISNIHQRESFRHESVTAAVCAGQIVGFGFYGYKLALFALMEKLREA</sequence>
<proteinExistence type="inferred from homology"/>
<comment type="function">
    <text evidence="1">Catalyzes a trans-dehydration via an enolate intermediate.</text>
</comment>
<comment type="catalytic activity">
    <reaction evidence="1">
        <text>3-dehydroquinate = 3-dehydroshikimate + H2O</text>
        <dbReference type="Rhea" id="RHEA:21096"/>
        <dbReference type="ChEBI" id="CHEBI:15377"/>
        <dbReference type="ChEBI" id="CHEBI:16630"/>
        <dbReference type="ChEBI" id="CHEBI:32364"/>
        <dbReference type="EC" id="4.2.1.10"/>
    </reaction>
</comment>
<comment type="pathway">
    <text evidence="1">Metabolic intermediate biosynthesis; chorismate biosynthesis; chorismate from D-erythrose 4-phosphate and phosphoenolpyruvate: step 3/7.</text>
</comment>
<comment type="subunit">
    <text evidence="1">Homododecamer.</text>
</comment>
<comment type="similarity">
    <text evidence="1">Belongs to the type-II 3-dehydroquinase family.</text>
</comment>
<feature type="chain" id="PRO_0000159871" description="3-dehydroquinate dehydratase">
    <location>
        <begin position="1"/>
        <end position="146"/>
    </location>
</feature>
<feature type="active site" description="Proton acceptor" evidence="1">
    <location>
        <position position="23"/>
    </location>
</feature>
<feature type="active site" description="Proton donor" evidence="1">
    <location>
        <position position="100"/>
    </location>
</feature>
<feature type="binding site" evidence="1">
    <location>
        <position position="74"/>
    </location>
    <ligand>
        <name>substrate</name>
    </ligand>
</feature>
<feature type="binding site" evidence="1">
    <location>
        <position position="80"/>
    </location>
    <ligand>
        <name>substrate</name>
    </ligand>
</feature>
<feature type="binding site" evidence="1">
    <location>
        <position position="87"/>
    </location>
    <ligand>
        <name>substrate</name>
    </ligand>
</feature>
<feature type="binding site" evidence="1">
    <location>
        <begin position="101"/>
        <end position="102"/>
    </location>
    <ligand>
        <name>substrate</name>
    </ligand>
</feature>
<feature type="binding site" evidence="1">
    <location>
        <position position="111"/>
    </location>
    <ligand>
        <name>substrate</name>
    </ligand>
</feature>
<feature type="site" description="Transition state stabilizer" evidence="1">
    <location>
        <position position="18"/>
    </location>
</feature>
<organism>
    <name type="scientific">Bacillus thuringiensis subsp. konkukian (strain 97-27)</name>
    <dbReference type="NCBI Taxonomy" id="281309"/>
    <lineage>
        <taxon>Bacteria</taxon>
        <taxon>Bacillati</taxon>
        <taxon>Bacillota</taxon>
        <taxon>Bacilli</taxon>
        <taxon>Bacillales</taxon>
        <taxon>Bacillaceae</taxon>
        <taxon>Bacillus</taxon>
        <taxon>Bacillus cereus group</taxon>
    </lineage>
</organism>